<evidence type="ECO:0000255" key="1"/>
<evidence type="ECO:0000305" key="2"/>
<evidence type="ECO:0000305" key="3">
    <source>
    </source>
</evidence>
<protein>
    <recommendedName>
        <fullName>Putative uncharacterized protein YDL172C</fullName>
    </recommendedName>
</protein>
<accession>Q12135</accession>
<feature type="chain" id="PRO_0000299862" description="Putative uncharacterized protein YDL172C">
    <location>
        <begin position="1"/>
        <end position="159"/>
    </location>
</feature>
<feature type="transmembrane region" description="Helical" evidence="1">
    <location>
        <begin position="17"/>
        <end position="37"/>
    </location>
</feature>
<feature type="transmembrane region" description="Helical" evidence="1">
    <location>
        <begin position="44"/>
        <end position="64"/>
    </location>
</feature>
<feature type="transmembrane region" description="Helical" evidence="1">
    <location>
        <begin position="67"/>
        <end position="87"/>
    </location>
</feature>
<name>YD172_YEAST</name>
<proteinExistence type="uncertain"/>
<gene>
    <name type="ordered locus">YDL172C</name>
</gene>
<comment type="subcellular location">
    <subcellularLocation>
        <location evidence="2">Membrane</location>
        <topology evidence="2">Multi-pass membrane protein</topology>
    </subcellularLocation>
</comment>
<comment type="miscellaneous">
    <text evidence="2">Partially overlaps YDL173W.</text>
</comment>
<comment type="caution">
    <text evidence="3">Product of a dubious gene prediction unlikely to encode a functional protein. Because of that it is not part of the S.cerevisiae S288c complete/reference proteome set.</text>
</comment>
<organism>
    <name type="scientific">Saccharomyces cerevisiae (strain ATCC 204508 / S288c)</name>
    <name type="common">Baker's yeast</name>
    <dbReference type="NCBI Taxonomy" id="559292"/>
    <lineage>
        <taxon>Eukaryota</taxon>
        <taxon>Fungi</taxon>
        <taxon>Dikarya</taxon>
        <taxon>Ascomycota</taxon>
        <taxon>Saccharomycotina</taxon>
        <taxon>Saccharomycetes</taxon>
        <taxon>Saccharomycetales</taxon>
        <taxon>Saccharomycetaceae</taxon>
        <taxon>Saccharomyces</taxon>
    </lineage>
</organism>
<keyword id="KW-0472">Membrane</keyword>
<keyword id="KW-0812">Transmembrane</keyword>
<keyword id="KW-1133">Transmembrane helix</keyword>
<dbReference type="EMBL" id="Z67750">
    <property type="protein sequence ID" value="CAA91573.1"/>
    <property type="molecule type" value="Genomic_DNA"/>
</dbReference>
<dbReference type="EMBL" id="Z74221">
    <property type="protein sequence ID" value="CAA98747.1"/>
    <property type="molecule type" value="Genomic_DNA"/>
</dbReference>
<dbReference type="PIR" id="S61040">
    <property type="entry name" value="S61040"/>
</dbReference>
<dbReference type="DIP" id="DIP-4732N"/>
<dbReference type="IntAct" id="Q12135">
    <property type="interactions" value="1"/>
</dbReference>
<dbReference type="STRING" id="4932.YDL172C"/>
<dbReference type="PaxDb" id="4932-YDL172C"/>
<dbReference type="EnsemblFungi" id="YDL172C_mRNA">
    <property type="protein sequence ID" value="YDL172C"/>
    <property type="gene ID" value="YDL172C"/>
</dbReference>
<dbReference type="AGR" id="SGD:S000002331"/>
<dbReference type="SGD" id="S000002331">
    <property type="gene designation" value="YDL172C"/>
</dbReference>
<dbReference type="HOGENOM" id="CLU_1662186_0_0_1"/>
<dbReference type="GO" id="GO:0016020">
    <property type="term" value="C:membrane"/>
    <property type="evidence" value="ECO:0007669"/>
    <property type="project" value="UniProtKB-SubCell"/>
</dbReference>
<reference key="1">
    <citation type="journal article" date="1997" name="Nature">
        <title>The nucleotide sequence of Saccharomyces cerevisiae chromosome IV.</title>
        <authorList>
            <person name="Jacq C."/>
            <person name="Alt-Moerbe J."/>
            <person name="Andre B."/>
            <person name="Arnold W."/>
            <person name="Bahr A."/>
            <person name="Ballesta J.P.G."/>
            <person name="Bargues M."/>
            <person name="Baron L."/>
            <person name="Becker A."/>
            <person name="Biteau N."/>
            <person name="Bloecker H."/>
            <person name="Blugeon C."/>
            <person name="Boskovic J."/>
            <person name="Brandt P."/>
            <person name="Brueckner M."/>
            <person name="Buitrago M.J."/>
            <person name="Coster F."/>
            <person name="Delaveau T."/>
            <person name="del Rey F."/>
            <person name="Dujon B."/>
            <person name="Eide L.G."/>
            <person name="Garcia-Cantalejo J.M."/>
            <person name="Goffeau A."/>
            <person name="Gomez-Peris A."/>
            <person name="Granotier C."/>
            <person name="Hanemann V."/>
            <person name="Hankeln T."/>
            <person name="Hoheisel J.D."/>
            <person name="Jaeger W."/>
            <person name="Jimenez A."/>
            <person name="Jonniaux J.-L."/>
            <person name="Kraemer C."/>
            <person name="Kuester H."/>
            <person name="Laamanen P."/>
            <person name="Legros Y."/>
            <person name="Louis E.J."/>
            <person name="Moeller-Rieker S."/>
            <person name="Monnet A."/>
            <person name="Moro M."/>
            <person name="Mueller-Auer S."/>
            <person name="Nussbaumer B."/>
            <person name="Paricio N."/>
            <person name="Paulin L."/>
            <person name="Perea J."/>
            <person name="Perez-Alonso M."/>
            <person name="Perez-Ortin J.E."/>
            <person name="Pohl T.M."/>
            <person name="Prydz H."/>
            <person name="Purnelle B."/>
            <person name="Rasmussen S.W."/>
            <person name="Remacha M.A."/>
            <person name="Revuelta J.L."/>
            <person name="Rieger M."/>
            <person name="Salom D."/>
            <person name="Saluz H.P."/>
            <person name="Saiz J.E."/>
            <person name="Saren A.-M."/>
            <person name="Schaefer M."/>
            <person name="Scharfe M."/>
            <person name="Schmidt E.R."/>
            <person name="Schneider C."/>
            <person name="Scholler P."/>
            <person name="Schwarz S."/>
            <person name="Soler-Mira A."/>
            <person name="Urrestarazu L.A."/>
            <person name="Verhasselt P."/>
            <person name="Vissers S."/>
            <person name="Voet M."/>
            <person name="Volckaert G."/>
            <person name="Wagner G."/>
            <person name="Wambutt R."/>
            <person name="Wedler E."/>
            <person name="Wedler H."/>
            <person name="Woelfl S."/>
            <person name="Harris D.E."/>
            <person name="Bowman S."/>
            <person name="Brown D."/>
            <person name="Churcher C.M."/>
            <person name="Connor R."/>
            <person name="Dedman K."/>
            <person name="Gentles S."/>
            <person name="Hamlin N."/>
            <person name="Hunt S."/>
            <person name="Jones L."/>
            <person name="McDonald S."/>
            <person name="Murphy L.D."/>
            <person name="Niblett D."/>
            <person name="Odell C."/>
            <person name="Oliver K."/>
            <person name="Rajandream M.A."/>
            <person name="Richards C."/>
            <person name="Shore L."/>
            <person name="Walsh S.V."/>
            <person name="Barrell B.G."/>
            <person name="Dietrich F.S."/>
            <person name="Mulligan J.T."/>
            <person name="Allen E."/>
            <person name="Araujo R."/>
            <person name="Aviles E."/>
            <person name="Berno A."/>
            <person name="Carpenter J."/>
            <person name="Chen E."/>
            <person name="Cherry J.M."/>
            <person name="Chung E."/>
            <person name="Duncan M."/>
            <person name="Hunicke-Smith S."/>
            <person name="Hyman R.W."/>
            <person name="Komp C."/>
            <person name="Lashkari D."/>
            <person name="Lew H."/>
            <person name="Lin D."/>
            <person name="Mosedale D."/>
            <person name="Nakahara K."/>
            <person name="Namath A."/>
            <person name="Oefner P."/>
            <person name="Oh C."/>
            <person name="Petel F.X."/>
            <person name="Roberts D."/>
            <person name="Schramm S."/>
            <person name="Schroeder M."/>
            <person name="Shogren T."/>
            <person name="Shroff N."/>
            <person name="Winant A."/>
            <person name="Yelton M.A."/>
            <person name="Botstein D."/>
            <person name="Davis R.W."/>
            <person name="Johnston M."/>
            <person name="Andrews S."/>
            <person name="Brinkman R."/>
            <person name="Cooper J."/>
            <person name="Ding H."/>
            <person name="Du Z."/>
            <person name="Favello A."/>
            <person name="Fulton L."/>
            <person name="Gattung S."/>
            <person name="Greco T."/>
            <person name="Hallsworth K."/>
            <person name="Hawkins J."/>
            <person name="Hillier L.W."/>
            <person name="Jier M."/>
            <person name="Johnson D."/>
            <person name="Johnston L."/>
            <person name="Kirsten J."/>
            <person name="Kucaba T."/>
            <person name="Langston Y."/>
            <person name="Latreille P."/>
            <person name="Le T."/>
            <person name="Mardis E."/>
            <person name="Menezes S."/>
            <person name="Miller N."/>
            <person name="Nhan M."/>
            <person name="Pauley A."/>
            <person name="Peluso D."/>
            <person name="Rifkin L."/>
            <person name="Riles L."/>
            <person name="Taich A."/>
            <person name="Trevaskis E."/>
            <person name="Vignati D."/>
            <person name="Wilcox L."/>
            <person name="Wohldman P."/>
            <person name="Vaudin M."/>
            <person name="Wilson R."/>
            <person name="Waterston R."/>
            <person name="Albermann K."/>
            <person name="Hani J."/>
            <person name="Heumann K."/>
            <person name="Kleine K."/>
            <person name="Mewes H.-W."/>
            <person name="Zollner A."/>
            <person name="Zaccaria P."/>
        </authorList>
    </citation>
    <scope>NUCLEOTIDE SEQUENCE [LARGE SCALE GENOMIC DNA]</scope>
    <source>
        <strain>ATCC 204508 / S288c</strain>
    </source>
</reference>
<reference key="2">
    <citation type="journal article" date="2014" name="G3 (Bethesda)">
        <title>The reference genome sequence of Saccharomyces cerevisiae: Then and now.</title>
        <authorList>
            <person name="Engel S.R."/>
            <person name="Dietrich F.S."/>
            <person name="Fisk D.G."/>
            <person name="Binkley G."/>
            <person name="Balakrishnan R."/>
            <person name="Costanzo M.C."/>
            <person name="Dwight S.S."/>
            <person name="Hitz B.C."/>
            <person name="Karra K."/>
            <person name="Nash R.S."/>
            <person name="Weng S."/>
            <person name="Wong E.D."/>
            <person name="Lloyd P."/>
            <person name="Skrzypek M.S."/>
            <person name="Miyasato S.R."/>
            <person name="Simison M."/>
            <person name="Cherry J.M."/>
        </authorList>
    </citation>
    <scope>GENOME REANNOTATION</scope>
    <source>
        <strain>ATCC 204508 / S288c</strain>
    </source>
</reference>
<sequence>MLFQLNIVFKELKNPDFFFFFFFFSLPLSSFKLNLSSSSSFKLWLIVFLLDFGEIMFPAPPLPIANFSGALLPLSLFLGFLDVDLIAAKALPLEVTTNRLSSFALIVSSSSILPPRISSSSFPPLLATFFLLKKMFPAPPLPTTIGALLFGDEVVACKD</sequence>